<accession>Q9XXK1</accession>
<accession>Q7K7K6</accession>
<accession>Q7YTU5</accession>
<accession>Q7YTU6</accession>
<evidence type="ECO:0000250" key="1">
    <source>
        <dbReference type="UniProtKB" id="P19483"/>
    </source>
</evidence>
<evidence type="ECO:0000255" key="2"/>
<evidence type="ECO:0000255" key="3">
    <source>
        <dbReference type="PROSITE-ProRule" id="PRU00499"/>
    </source>
</evidence>
<evidence type="ECO:0000255" key="4">
    <source>
        <dbReference type="PROSITE-ProRule" id="PRU10106"/>
    </source>
</evidence>
<evidence type="ECO:0000269" key="5">
    <source>
    </source>
</evidence>
<evidence type="ECO:0000305" key="6"/>
<evidence type="ECO:0000312" key="7">
    <source>
        <dbReference type="EMBL" id="CAA19429.1"/>
    </source>
</evidence>
<evidence type="ECO:0000312" key="8">
    <source>
        <dbReference type="WormBase" id="H28O16.1a"/>
    </source>
</evidence>
<sequence length="538" mass="57788">MLSKRIVTALNTAVKVQNAGIATTARGMAGASGSEVSKILEERILGTETGINLEETGKVLSIGDGIARVYGLKNIQAEEMVEFDSGIKGMAMNLDVDNVGVVVFGNDKVIREGDIVKRTGAIVDVPVGDGLLGRVVDALGNPIDGKGPIANARRSRVEVKAPGIIPRLSVREPMVTGVKAVDSLVPIGRGQRELIIGDRQTGKTAIAIDTIINQKRFNDAGDDKKKLFCIYVAVGQKRSTVAQIVKRLTDAGAMDYTIVVSATASDAAPLQFLAPYSGCAMGEHFRDNGKHALIIFDDLSKQAVAYRQMSLLLRRPPGREAYPGDVFYLHSRLLERAAKMNNSLGGGSLTALPVIETQAGDVSAYIPTNVISITDGQIFLETELFYKGVRPAINVGLSVSRVGSAAQTKAMKQVAGSMKLELAQYREVAAFAQFGSDLDASTQQLLNRGVRLTELLKQGQYVPMGIEEQVGVIYAGVKGYLDKVDPSAITKFEKEFLAHLRSSQQALLKTIREEGQISPQTDAQLKDVVVNFLATFKP</sequence>
<reference evidence="7" key="1">
    <citation type="journal article" date="1998" name="Science">
        <title>Genome sequence of the nematode C. elegans: a platform for investigating biology.</title>
        <authorList>
            <consortium name="The C. elegans sequencing consortium"/>
        </authorList>
    </citation>
    <scope>NUCLEOTIDE SEQUENCE [LARGE SCALE GENOMIC DNA]</scope>
    <source>
        <strain>Bristol N2</strain>
    </source>
</reference>
<reference evidence="6 7" key="2">
    <citation type="submission" date="2006-03" db="UniProtKB">
        <authorList>
            <person name="Bienvenut W.V."/>
        </authorList>
    </citation>
    <scope>PROTEIN SEQUENCE OF 59-68; 119-134; 168-189; 193-199 AND 204-215</scope>
    <scope>IDENTIFICATION BY MASS SPECTROMETRY</scope>
</reference>
<reference key="3">
    <citation type="journal article" date="2018" name="Cell">
        <title>Microbial Siderophore Enterobactin Promotes Mitochondrial Iron Uptake and Development of the Host via Interaction with ATP Synthase.</title>
        <authorList>
            <person name="Qi B."/>
            <person name="Han M."/>
        </authorList>
    </citation>
    <scope>FUNCTION</scope>
    <scope>DISRUPTION PHENOTYPE</scope>
    <scope>IDENTIFICATION BY MASS SPECTROMETRY</scope>
    <scope>SUBCELLULAR LOCATION</scope>
    <scope>TISSUE SPECIFICITY</scope>
    <scope>MUTAGENESIS OF 198-ASP--ALA-205 AND 228-PHE--LEU-248</scope>
    <scope>MISCELLANEOUS</scope>
</reference>
<keyword id="KW-0066">ATP synthesis</keyword>
<keyword id="KW-0067">ATP-binding</keyword>
<keyword id="KW-0139">CF(1)</keyword>
<keyword id="KW-0903">Direct protein sequencing</keyword>
<keyword id="KW-0375">Hydrogen ion transport</keyword>
<keyword id="KW-0406">Ion transport</keyword>
<keyword id="KW-0472">Membrane</keyword>
<keyword id="KW-0496">Mitochondrion</keyword>
<keyword id="KW-0999">Mitochondrion inner membrane</keyword>
<keyword id="KW-0547">Nucleotide-binding</keyword>
<keyword id="KW-0597">Phosphoprotein</keyword>
<keyword id="KW-1185">Reference proteome</keyword>
<keyword id="KW-0809">Transit peptide</keyword>
<keyword id="KW-0813">Transport</keyword>
<proteinExistence type="evidence at protein level"/>
<dbReference type="EMBL" id="BX284601">
    <property type="protein sequence ID" value="CAA19429.1"/>
    <property type="molecule type" value="Genomic_DNA"/>
</dbReference>
<dbReference type="EMBL" id="BX284601">
    <property type="protein sequence ID" value="CAF31480.1"/>
    <property type="molecule type" value="Genomic_DNA"/>
</dbReference>
<dbReference type="PIR" id="T23128">
    <property type="entry name" value="T23128"/>
</dbReference>
<dbReference type="RefSeq" id="NP_001021529.1">
    <property type="nucleotide sequence ID" value="NM_001026358.4"/>
</dbReference>
<dbReference type="SMR" id="Q9XXK1"/>
<dbReference type="BioGRID" id="38531">
    <property type="interactions" value="74"/>
</dbReference>
<dbReference type="DIP" id="DIP-25446N"/>
<dbReference type="FunCoup" id="Q9XXK1">
    <property type="interactions" value="1583"/>
</dbReference>
<dbReference type="IntAct" id="Q9XXK1">
    <property type="interactions" value="2"/>
</dbReference>
<dbReference type="STRING" id="6239.H28O16.1a.2"/>
<dbReference type="iPTMnet" id="Q9XXK1"/>
<dbReference type="PaxDb" id="6239-H28O16.1a"/>
<dbReference type="PeptideAtlas" id="Q9XXK1"/>
<dbReference type="GeneID" id="173134"/>
<dbReference type="KEGG" id="cel:CELE_H28O16.1"/>
<dbReference type="AGR" id="WB:WBGene00010419"/>
<dbReference type="CTD" id="173134"/>
<dbReference type="WormBase" id="H28O16.1a">
    <property type="protein sequence ID" value="CE18826"/>
    <property type="gene ID" value="WBGene00010419"/>
    <property type="gene designation" value="atp-1"/>
</dbReference>
<dbReference type="eggNOG" id="KOG1353">
    <property type="taxonomic scope" value="Eukaryota"/>
</dbReference>
<dbReference type="GeneTree" id="ENSGT00550000074846"/>
<dbReference type="InParanoid" id="Q9XXK1"/>
<dbReference type="OMA" id="INQRDNW"/>
<dbReference type="OrthoDB" id="9805536at2759"/>
<dbReference type="PhylomeDB" id="Q9XXK1"/>
<dbReference type="Reactome" id="R-CEL-163210">
    <property type="pathway name" value="Formation of ATP by chemiosmotic coupling"/>
</dbReference>
<dbReference type="Reactome" id="R-CEL-8949613">
    <property type="pathway name" value="Cristae formation"/>
</dbReference>
<dbReference type="Reactome" id="R-CEL-9837999">
    <property type="pathway name" value="Mitochondrial protein degradation"/>
</dbReference>
<dbReference type="SignaLink" id="Q9XXK1"/>
<dbReference type="PRO" id="PR:Q9XXK1"/>
<dbReference type="Proteomes" id="UP000001940">
    <property type="component" value="Chromosome I"/>
</dbReference>
<dbReference type="Bgee" id="WBGene00010419">
    <property type="expression patterns" value="Expressed in adult organism and 4 other cell types or tissues"/>
</dbReference>
<dbReference type="GO" id="GO:0005743">
    <property type="term" value="C:mitochondrial inner membrane"/>
    <property type="evidence" value="ECO:0007669"/>
    <property type="project" value="UniProtKB-SubCell"/>
</dbReference>
<dbReference type="GO" id="GO:0005739">
    <property type="term" value="C:mitochondrion"/>
    <property type="evidence" value="ECO:0000314"/>
    <property type="project" value="UniProtKB"/>
</dbReference>
<dbReference type="GO" id="GO:0045259">
    <property type="term" value="C:proton-transporting ATP synthase complex"/>
    <property type="evidence" value="ECO:0007669"/>
    <property type="project" value="UniProtKB-KW"/>
</dbReference>
<dbReference type="GO" id="GO:0043531">
    <property type="term" value="F:ADP binding"/>
    <property type="evidence" value="ECO:0000318"/>
    <property type="project" value="GO_Central"/>
</dbReference>
<dbReference type="GO" id="GO:0005524">
    <property type="term" value="F:ATP binding"/>
    <property type="evidence" value="ECO:0000318"/>
    <property type="project" value="GO_Central"/>
</dbReference>
<dbReference type="GO" id="GO:1903981">
    <property type="term" value="F:enterobactin binding"/>
    <property type="evidence" value="ECO:0000314"/>
    <property type="project" value="UniProtKB"/>
</dbReference>
<dbReference type="GO" id="GO:0046933">
    <property type="term" value="F:proton-transporting ATP synthase activity, rotational mechanism"/>
    <property type="evidence" value="ECO:0007669"/>
    <property type="project" value="InterPro"/>
</dbReference>
<dbReference type="GO" id="GO:0033212">
    <property type="term" value="P:iron import into cell"/>
    <property type="evidence" value="ECO:0000315"/>
    <property type="project" value="UniProtKB"/>
</dbReference>
<dbReference type="GO" id="GO:0015986">
    <property type="term" value="P:proton motive force-driven ATP synthesis"/>
    <property type="evidence" value="ECO:0000318"/>
    <property type="project" value="GO_Central"/>
</dbReference>
<dbReference type="CDD" id="cd18113">
    <property type="entry name" value="ATP-synt_F1_alpha_C"/>
    <property type="match status" value="1"/>
</dbReference>
<dbReference type="CDD" id="cd18116">
    <property type="entry name" value="ATP-synt_F1_alpha_N"/>
    <property type="match status" value="1"/>
</dbReference>
<dbReference type="CDD" id="cd01132">
    <property type="entry name" value="F1-ATPase_alpha_CD"/>
    <property type="match status" value="1"/>
</dbReference>
<dbReference type="FunFam" id="1.20.150.20:FF:000001">
    <property type="entry name" value="ATP synthase subunit alpha"/>
    <property type="match status" value="1"/>
</dbReference>
<dbReference type="FunFam" id="2.40.30.20:FF:000001">
    <property type="entry name" value="ATP synthase subunit alpha"/>
    <property type="match status" value="1"/>
</dbReference>
<dbReference type="FunFam" id="3.40.50.300:FF:002432">
    <property type="entry name" value="ATP synthase subunit alpha, mitochondrial"/>
    <property type="match status" value="1"/>
</dbReference>
<dbReference type="Gene3D" id="2.40.30.20">
    <property type="match status" value="1"/>
</dbReference>
<dbReference type="Gene3D" id="1.20.150.20">
    <property type="entry name" value="ATP synthase alpha/beta chain, C-terminal domain"/>
    <property type="match status" value="1"/>
</dbReference>
<dbReference type="Gene3D" id="3.40.50.300">
    <property type="entry name" value="P-loop containing nucleotide triphosphate hydrolases"/>
    <property type="match status" value="1"/>
</dbReference>
<dbReference type="HAMAP" id="MF_01346">
    <property type="entry name" value="ATP_synth_alpha_bact"/>
    <property type="match status" value="1"/>
</dbReference>
<dbReference type="InterPro" id="IPR023366">
    <property type="entry name" value="ATP_synth_asu-like_sf"/>
</dbReference>
<dbReference type="InterPro" id="IPR000793">
    <property type="entry name" value="ATP_synth_asu_C"/>
</dbReference>
<dbReference type="InterPro" id="IPR038376">
    <property type="entry name" value="ATP_synth_asu_C_sf"/>
</dbReference>
<dbReference type="InterPro" id="IPR033732">
    <property type="entry name" value="ATP_synth_F1_a_nt-bd_dom"/>
</dbReference>
<dbReference type="InterPro" id="IPR005294">
    <property type="entry name" value="ATP_synth_F1_asu"/>
</dbReference>
<dbReference type="InterPro" id="IPR020003">
    <property type="entry name" value="ATPase_a/bsu_AS"/>
</dbReference>
<dbReference type="InterPro" id="IPR004100">
    <property type="entry name" value="ATPase_F1/V1/A1_a/bsu_N"/>
</dbReference>
<dbReference type="InterPro" id="IPR036121">
    <property type="entry name" value="ATPase_F1/V1/A1_a/bsu_N_sf"/>
</dbReference>
<dbReference type="InterPro" id="IPR000194">
    <property type="entry name" value="ATPase_F1/V1/A1_a/bsu_nucl-bd"/>
</dbReference>
<dbReference type="InterPro" id="IPR027417">
    <property type="entry name" value="P-loop_NTPase"/>
</dbReference>
<dbReference type="NCBIfam" id="TIGR00962">
    <property type="entry name" value="atpA"/>
    <property type="match status" value="1"/>
</dbReference>
<dbReference type="NCBIfam" id="NF009884">
    <property type="entry name" value="PRK13343.1"/>
    <property type="match status" value="1"/>
</dbReference>
<dbReference type="PANTHER" id="PTHR48082">
    <property type="entry name" value="ATP SYNTHASE SUBUNIT ALPHA, MITOCHONDRIAL"/>
    <property type="match status" value="1"/>
</dbReference>
<dbReference type="PANTHER" id="PTHR48082:SF2">
    <property type="entry name" value="ATP SYNTHASE SUBUNIT ALPHA, MITOCHONDRIAL"/>
    <property type="match status" value="1"/>
</dbReference>
<dbReference type="Pfam" id="PF00006">
    <property type="entry name" value="ATP-synt_ab"/>
    <property type="match status" value="1"/>
</dbReference>
<dbReference type="Pfam" id="PF00306">
    <property type="entry name" value="ATP-synt_ab_C"/>
    <property type="match status" value="1"/>
</dbReference>
<dbReference type="Pfam" id="PF02874">
    <property type="entry name" value="ATP-synt_ab_N"/>
    <property type="match status" value="1"/>
</dbReference>
<dbReference type="PIRSF" id="PIRSF039088">
    <property type="entry name" value="F_ATPase_subunit_alpha"/>
    <property type="match status" value="1"/>
</dbReference>
<dbReference type="SUPFAM" id="SSF47917">
    <property type="entry name" value="C-terminal domain of alpha and beta subunits of F1 ATP synthase"/>
    <property type="match status" value="1"/>
</dbReference>
<dbReference type="SUPFAM" id="SSF50615">
    <property type="entry name" value="N-terminal domain of alpha and beta subunits of F1 ATP synthase"/>
    <property type="match status" value="1"/>
</dbReference>
<dbReference type="SUPFAM" id="SSF52540">
    <property type="entry name" value="P-loop containing nucleoside triphosphate hydrolases"/>
    <property type="match status" value="1"/>
</dbReference>
<dbReference type="PROSITE" id="PS00152">
    <property type="entry name" value="ATPASE_ALPHA_BETA"/>
    <property type="match status" value="1"/>
</dbReference>
<comment type="function">
    <text evidence="1 5 6">Mitochondrial membrane ATP synthase (F(1)F(0) ATP synthase or Complex V) produces ATP from ADP in the presence of a proton gradient across the membrane which is generated by electron transport complexes of the respiratory chain. F-type ATPases consist of two structural domains, F(1) - containing the extramembraneous catalytic core, and F(0) - containing the membrane proton channel, linked together by a central stalk and a peripheral stalk. During catalysis, ATP synthesis in the catalytic domain of F(1) is coupled via a rotary mechanism of the central stalk subunits to proton translocation. Subunits alpha and beta form the catalytic core in F(1). Rotation of the central stalk against the surrounding subunits leads to hydrolysis of ATP in three separate catalytic sites on the beta subunits (Probable). Subunit alpha does not bear the catalytic high-affinity ATP-binding sites (By similarity). Binds the bacterial siderophore enterobactin and is required for the assimilation of enterobactin-bound iron from non-pathogenic bacteria. Promotes mitochondrial accumulation of enterobactin-derived iron ions (PubMed:30146159).</text>
</comment>
<comment type="subunit">
    <text evidence="6">Subunit of the F-type ATPase which has 2 components, CF(1) - the catalytic core - and CF(0) - the membrane proton channel.</text>
</comment>
<comment type="subcellular location">
    <subcellularLocation>
        <location evidence="5">Mitochondrion</location>
    </subcellularLocation>
    <subcellularLocation>
        <location evidence="1">Mitochondrion inner membrane</location>
        <topology evidence="1">Peripheral membrane protein</topology>
        <orientation evidence="1">Matrix side</orientation>
    </subcellularLocation>
</comment>
<comment type="tissue specificity">
    <text evidence="5">Ubiquitous (at protein level).</text>
</comment>
<comment type="disruption phenotype">
    <text evidence="5">RNAi-mediated knockdown of the protein leads to impaired growth and development. In addition, it impairs the assimilation of enterobactin-bound iron.</text>
</comment>
<comment type="miscellaneous">
    <text evidence="5">The siderophore enterobactin (Ent) produced by enteric bacteria binds Fe(3+) and helps them scavenge iron ions from the environment. Enterobactin produced by non-pathogenic E.coli strains facilitates iron assimilation in C.elegans (PubMed:30146159). Other siderophores, such as ferrichrome and pyoverdine that is produced by pathogenic bacteria, do not facilitate intestinal iron absorption in C.elegans (PubMed:30146159).</text>
</comment>
<comment type="similarity">
    <text evidence="2">Belongs to the ATPase alpha/beta chains family.</text>
</comment>
<feature type="transit peptide" description="Mitochondrion" evidence="2">
    <location>
        <begin position="1"/>
        <end status="unknown"/>
    </location>
</feature>
<feature type="chain" id="PRO_0000239935" description="ATP synthase subunit alpha, mitochondrial">
    <location>
        <begin status="unknown"/>
        <end position="538"/>
    </location>
</feature>
<feature type="region of interest" description="Essential and sufficient for enterobactin binding" evidence="5">
    <location>
        <begin position="228"/>
        <end position="248"/>
    </location>
</feature>
<feature type="binding site" evidence="3">
    <location>
        <begin position="197"/>
        <end position="204"/>
    </location>
    <ligand>
        <name>ATP</name>
        <dbReference type="ChEBI" id="CHEBI:30616"/>
    </ligand>
</feature>
<feature type="site" description="Required for activity" evidence="4">
    <location>
        <position position="398"/>
    </location>
</feature>
<feature type="mutagenesis site" description="No effect on enterobactin binding and iron uptake." evidence="5">
    <location>
        <begin position="198"/>
        <end position="205"/>
    </location>
</feature>
<feature type="mutagenesis site" description="Loss of enterobactin binding." evidence="5">
    <location>
        <begin position="228"/>
        <end position="248"/>
    </location>
</feature>
<protein>
    <recommendedName>
        <fullName>ATP synthase subunit alpha, mitochondrial</fullName>
    </recommendedName>
    <alternativeName>
        <fullName evidence="8">ATP synthase subunit atp-1</fullName>
    </alternativeName>
</protein>
<gene>
    <name evidence="8" type="primary">atp-1</name>
    <name evidence="8" type="ORF">H28O16.1</name>
</gene>
<organism>
    <name type="scientific">Caenorhabditis elegans</name>
    <dbReference type="NCBI Taxonomy" id="6239"/>
    <lineage>
        <taxon>Eukaryota</taxon>
        <taxon>Metazoa</taxon>
        <taxon>Ecdysozoa</taxon>
        <taxon>Nematoda</taxon>
        <taxon>Chromadorea</taxon>
        <taxon>Rhabditida</taxon>
        <taxon>Rhabditina</taxon>
        <taxon>Rhabditomorpha</taxon>
        <taxon>Rhabditoidea</taxon>
        <taxon>Rhabditidae</taxon>
        <taxon>Peloderinae</taxon>
        <taxon>Caenorhabditis</taxon>
    </lineage>
</organism>
<name>ATPA_CAEEL</name>